<sequence>MTIWVDADACPNVIKEILYRAAERMQMPLVLVANQSLRVPPSRFIRTLRVAAGFDVADNEIVRQCEAGDLVITADIPLAAEAIEKGAAALNPRGERYTPATIRERLTMRDFMDTLRASGIQTGGPDSLSQRDRQAFAAELEKWWLEVQRSRG</sequence>
<organism>
    <name type="scientific">Escherichia coli (strain SMS-3-5 / SECEC)</name>
    <dbReference type="NCBI Taxonomy" id="439855"/>
    <lineage>
        <taxon>Bacteria</taxon>
        <taxon>Pseudomonadati</taxon>
        <taxon>Pseudomonadota</taxon>
        <taxon>Gammaproteobacteria</taxon>
        <taxon>Enterobacterales</taxon>
        <taxon>Enterobacteriaceae</taxon>
        <taxon>Escherichia</taxon>
    </lineage>
</organism>
<accession>B1LIS1</accession>
<proteinExistence type="inferred from homology"/>
<evidence type="ECO:0000255" key="1">
    <source>
        <dbReference type="HAMAP-Rule" id="MF_00489"/>
    </source>
</evidence>
<gene>
    <name evidence="1" type="primary">yaiI</name>
    <name type="ordered locus">EcSMS35_0417</name>
</gene>
<reference key="1">
    <citation type="journal article" date="2008" name="J. Bacteriol.">
        <title>Insights into the environmental resistance gene pool from the genome sequence of the multidrug-resistant environmental isolate Escherichia coli SMS-3-5.</title>
        <authorList>
            <person name="Fricke W.F."/>
            <person name="Wright M.S."/>
            <person name="Lindell A.H."/>
            <person name="Harkins D.M."/>
            <person name="Baker-Austin C."/>
            <person name="Ravel J."/>
            <person name="Stepanauskas R."/>
        </authorList>
    </citation>
    <scope>NUCLEOTIDE SEQUENCE [LARGE SCALE GENOMIC DNA]</scope>
    <source>
        <strain>SMS-3-5 / SECEC</strain>
    </source>
</reference>
<comment type="similarity">
    <text evidence="1">Belongs to the UPF0178 family.</text>
</comment>
<protein>
    <recommendedName>
        <fullName evidence="1">UPF0178 protein YaiI</fullName>
    </recommendedName>
</protein>
<feature type="chain" id="PRO_1000126191" description="UPF0178 protein YaiI">
    <location>
        <begin position="1"/>
        <end position="152"/>
    </location>
</feature>
<name>YAII_ECOSM</name>
<dbReference type="EMBL" id="CP000970">
    <property type="protein sequence ID" value="ACB17968.1"/>
    <property type="molecule type" value="Genomic_DNA"/>
</dbReference>
<dbReference type="RefSeq" id="WP_000158159.1">
    <property type="nucleotide sequence ID" value="NC_010498.1"/>
</dbReference>
<dbReference type="KEGG" id="ecm:EcSMS35_0417"/>
<dbReference type="HOGENOM" id="CLU_106619_2_1_6"/>
<dbReference type="Proteomes" id="UP000007011">
    <property type="component" value="Chromosome"/>
</dbReference>
<dbReference type="CDD" id="cd18720">
    <property type="entry name" value="PIN_YqxD-like"/>
    <property type="match status" value="1"/>
</dbReference>
<dbReference type="HAMAP" id="MF_00489">
    <property type="entry name" value="UPF0178"/>
    <property type="match status" value="1"/>
</dbReference>
<dbReference type="InterPro" id="IPR003791">
    <property type="entry name" value="UPF0178"/>
</dbReference>
<dbReference type="NCBIfam" id="NF001095">
    <property type="entry name" value="PRK00124.1"/>
    <property type="match status" value="1"/>
</dbReference>
<dbReference type="PANTHER" id="PTHR35146">
    <property type="entry name" value="UPF0178 PROTEIN YAII"/>
    <property type="match status" value="1"/>
</dbReference>
<dbReference type="PANTHER" id="PTHR35146:SF1">
    <property type="entry name" value="UPF0178 PROTEIN YAII"/>
    <property type="match status" value="1"/>
</dbReference>
<dbReference type="Pfam" id="PF02639">
    <property type="entry name" value="DUF188"/>
    <property type="match status" value="1"/>
</dbReference>